<accession>B7MCR9</accession>
<sequence length="117" mass="12770">MDKKSARIRRATRARRKLQELGATRLVVHRTPRHIYAQVIAPNGSEVLVAASTVEKAIAEQLKYTGNKDAAAAVGKAVAERALEKGIKDVSFDRSGFQYHGRVQALADAAREAGLQF</sequence>
<name>RL18_ECO45</name>
<comment type="function">
    <text evidence="1">This is one of the proteins that bind and probably mediate the attachment of the 5S RNA into the large ribosomal subunit, where it forms part of the central protuberance.</text>
</comment>
<comment type="subunit">
    <text evidence="1">Part of the 50S ribosomal subunit; part of the 5S rRNA/L5/L18/L25 subcomplex. Contacts the 5S and 23S rRNAs.</text>
</comment>
<comment type="similarity">
    <text evidence="1">Belongs to the universal ribosomal protein uL18 family.</text>
</comment>
<keyword id="KW-1185">Reference proteome</keyword>
<keyword id="KW-0687">Ribonucleoprotein</keyword>
<keyword id="KW-0689">Ribosomal protein</keyword>
<keyword id="KW-0694">RNA-binding</keyword>
<keyword id="KW-0699">rRNA-binding</keyword>
<feature type="chain" id="PRO_1000142656" description="Large ribosomal subunit protein uL18">
    <location>
        <begin position="1"/>
        <end position="117"/>
    </location>
</feature>
<reference key="1">
    <citation type="journal article" date="2009" name="PLoS Genet.">
        <title>Organised genome dynamics in the Escherichia coli species results in highly diverse adaptive paths.</title>
        <authorList>
            <person name="Touchon M."/>
            <person name="Hoede C."/>
            <person name="Tenaillon O."/>
            <person name="Barbe V."/>
            <person name="Baeriswyl S."/>
            <person name="Bidet P."/>
            <person name="Bingen E."/>
            <person name="Bonacorsi S."/>
            <person name="Bouchier C."/>
            <person name="Bouvet O."/>
            <person name="Calteau A."/>
            <person name="Chiapello H."/>
            <person name="Clermont O."/>
            <person name="Cruveiller S."/>
            <person name="Danchin A."/>
            <person name="Diard M."/>
            <person name="Dossat C."/>
            <person name="Karoui M.E."/>
            <person name="Frapy E."/>
            <person name="Garry L."/>
            <person name="Ghigo J.M."/>
            <person name="Gilles A.M."/>
            <person name="Johnson J."/>
            <person name="Le Bouguenec C."/>
            <person name="Lescat M."/>
            <person name="Mangenot S."/>
            <person name="Martinez-Jehanne V."/>
            <person name="Matic I."/>
            <person name="Nassif X."/>
            <person name="Oztas S."/>
            <person name="Petit M.A."/>
            <person name="Pichon C."/>
            <person name="Rouy Z."/>
            <person name="Ruf C.S."/>
            <person name="Schneider D."/>
            <person name="Tourret J."/>
            <person name="Vacherie B."/>
            <person name="Vallenet D."/>
            <person name="Medigue C."/>
            <person name="Rocha E.P.C."/>
            <person name="Denamur E."/>
        </authorList>
    </citation>
    <scope>NUCLEOTIDE SEQUENCE [LARGE SCALE GENOMIC DNA]</scope>
    <source>
        <strain>S88 / ExPEC</strain>
    </source>
</reference>
<dbReference type="EMBL" id="CU928161">
    <property type="protein sequence ID" value="CAR04908.1"/>
    <property type="molecule type" value="Genomic_DNA"/>
</dbReference>
<dbReference type="RefSeq" id="WP_000358960.1">
    <property type="nucleotide sequence ID" value="NC_011742.1"/>
</dbReference>
<dbReference type="EMDB" id="EMD-7970"/>
<dbReference type="EMDB" id="EMD-8826"/>
<dbReference type="EMDB" id="EMD-8829"/>
<dbReference type="SMR" id="B7MCR9"/>
<dbReference type="IntAct" id="B7MCR9">
    <property type="interactions" value="1"/>
</dbReference>
<dbReference type="GeneID" id="98390426"/>
<dbReference type="KEGG" id="ecz:ECS88_3691"/>
<dbReference type="HOGENOM" id="CLU_098841_0_1_6"/>
<dbReference type="Proteomes" id="UP000000747">
    <property type="component" value="Chromosome"/>
</dbReference>
<dbReference type="GO" id="GO:0022625">
    <property type="term" value="C:cytosolic large ribosomal subunit"/>
    <property type="evidence" value="ECO:0007669"/>
    <property type="project" value="TreeGrafter"/>
</dbReference>
<dbReference type="GO" id="GO:0008097">
    <property type="term" value="F:5S rRNA binding"/>
    <property type="evidence" value="ECO:0007669"/>
    <property type="project" value="TreeGrafter"/>
</dbReference>
<dbReference type="GO" id="GO:0003735">
    <property type="term" value="F:structural constituent of ribosome"/>
    <property type="evidence" value="ECO:0007669"/>
    <property type="project" value="InterPro"/>
</dbReference>
<dbReference type="GO" id="GO:0006412">
    <property type="term" value="P:translation"/>
    <property type="evidence" value="ECO:0007669"/>
    <property type="project" value="UniProtKB-UniRule"/>
</dbReference>
<dbReference type="CDD" id="cd00432">
    <property type="entry name" value="Ribosomal_L18_L5e"/>
    <property type="match status" value="1"/>
</dbReference>
<dbReference type="FunFam" id="3.30.420.100:FF:000001">
    <property type="entry name" value="50S ribosomal protein L18"/>
    <property type="match status" value="1"/>
</dbReference>
<dbReference type="Gene3D" id="3.30.420.100">
    <property type="match status" value="1"/>
</dbReference>
<dbReference type="HAMAP" id="MF_01337_B">
    <property type="entry name" value="Ribosomal_uL18_B"/>
    <property type="match status" value="1"/>
</dbReference>
<dbReference type="InterPro" id="IPR004389">
    <property type="entry name" value="Ribosomal_uL18_bac-type"/>
</dbReference>
<dbReference type="InterPro" id="IPR005484">
    <property type="entry name" value="Ribosomal_uL18_bac/euk"/>
</dbReference>
<dbReference type="NCBIfam" id="TIGR00060">
    <property type="entry name" value="L18_bact"/>
    <property type="match status" value="1"/>
</dbReference>
<dbReference type="PANTHER" id="PTHR12899">
    <property type="entry name" value="39S RIBOSOMAL PROTEIN L18, MITOCHONDRIAL"/>
    <property type="match status" value="1"/>
</dbReference>
<dbReference type="PANTHER" id="PTHR12899:SF3">
    <property type="entry name" value="LARGE RIBOSOMAL SUBUNIT PROTEIN UL18M"/>
    <property type="match status" value="1"/>
</dbReference>
<dbReference type="Pfam" id="PF00861">
    <property type="entry name" value="Ribosomal_L18p"/>
    <property type="match status" value="1"/>
</dbReference>
<dbReference type="SUPFAM" id="SSF53137">
    <property type="entry name" value="Translational machinery components"/>
    <property type="match status" value="1"/>
</dbReference>
<protein>
    <recommendedName>
        <fullName evidence="1">Large ribosomal subunit protein uL18</fullName>
    </recommendedName>
    <alternativeName>
        <fullName evidence="2">50S ribosomal protein L18</fullName>
    </alternativeName>
</protein>
<organism>
    <name type="scientific">Escherichia coli O45:K1 (strain S88 / ExPEC)</name>
    <dbReference type="NCBI Taxonomy" id="585035"/>
    <lineage>
        <taxon>Bacteria</taxon>
        <taxon>Pseudomonadati</taxon>
        <taxon>Pseudomonadota</taxon>
        <taxon>Gammaproteobacteria</taxon>
        <taxon>Enterobacterales</taxon>
        <taxon>Enterobacteriaceae</taxon>
        <taxon>Escherichia</taxon>
    </lineage>
</organism>
<evidence type="ECO:0000255" key="1">
    <source>
        <dbReference type="HAMAP-Rule" id="MF_01337"/>
    </source>
</evidence>
<evidence type="ECO:0000305" key="2"/>
<proteinExistence type="inferred from homology"/>
<gene>
    <name evidence="1" type="primary">rplR</name>
    <name type="ordered locus">ECS88_3691</name>
</gene>